<keyword id="KW-0067">ATP-binding</keyword>
<keyword id="KW-0963">Cytoplasm</keyword>
<keyword id="KW-0436">Ligase</keyword>
<keyword id="KW-0547">Nucleotide-binding</keyword>
<keyword id="KW-0566">Pantothenate biosynthesis</keyword>
<proteinExistence type="inferred from homology"/>
<feature type="chain" id="PRO_1000097077" description="Pantothenate synthetase">
    <location>
        <begin position="1"/>
        <end position="284"/>
    </location>
</feature>
<feature type="active site" description="Proton donor" evidence="1">
    <location>
        <position position="37"/>
    </location>
</feature>
<feature type="binding site" evidence="1">
    <location>
        <begin position="30"/>
        <end position="37"/>
    </location>
    <ligand>
        <name>ATP</name>
        <dbReference type="ChEBI" id="CHEBI:30616"/>
    </ligand>
</feature>
<feature type="binding site" evidence="1">
    <location>
        <position position="61"/>
    </location>
    <ligand>
        <name>(R)-pantoate</name>
        <dbReference type="ChEBI" id="CHEBI:15980"/>
    </ligand>
</feature>
<feature type="binding site" evidence="1">
    <location>
        <position position="61"/>
    </location>
    <ligand>
        <name>beta-alanine</name>
        <dbReference type="ChEBI" id="CHEBI:57966"/>
    </ligand>
</feature>
<feature type="binding site" evidence="1">
    <location>
        <begin position="149"/>
        <end position="152"/>
    </location>
    <ligand>
        <name>ATP</name>
        <dbReference type="ChEBI" id="CHEBI:30616"/>
    </ligand>
</feature>
<feature type="binding site" evidence="1">
    <location>
        <position position="155"/>
    </location>
    <ligand>
        <name>(R)-pantoate</name>
        <dbReference type="ChEBI" id="CHEBI:15980"/>
    </ligand>
</feature>
<feature type="binding site" evidence="1">
    <location>
        <position position="178"/>
    </location>
    <ligand>
        <name>ATP</name>
        <dbReference type="ChEBI" id="CHEBI:30616"/>
    </ligand>
</feature>
<feature type="binding site" evidence="1">
    <location>
        <begin position="186"/>
        <end position="189"/>
    </location>
    <ligand>
        <name>ATP</name>
        <dbReference type="ChEBI" id="CHEBI:30616"/>
    </ligand>
</feature>
<gene>
    <name evidence="1" type="primary">panC</name>
    <name type="ordered locus">KPK_4596</name>
</gene>
<sequence length="284" mass="31462">MLIIESVLLLRQHIRRLRQEGKRIALVPTMGNLHDGHMKLVDEAKASADVVVVSIFVNPMQFDRADDLARYPRTLQDDCEKLNKRHVDFVFAPTPAEVYPQGTEGQTYVDVPGLSTMLEGASRPGHFRGVSTIVSKLFNLVQPDVACFGEKDFQQLALIRKMVADMGYDIEIIGVPIVRAKDGLALSSRNGYLTADQRKIAPGLYKVLSAVAEKLAAGDRQLDEIIAIAEQELNEKGFRADDIQIRDADTLLELTDASQRAVILMAAWLGQARLIDNQIVTLGQ</sequence>
<comment type="function">
    <text evidence="1">Catalyzes the condensation of pantoate with beta-alanine in an ATP-dependent reaction via a pantoyl-adenylate intermediate.</text>
</comment>
<comment type="catalytic activity">
    <reaction evidence="1">
        <text>(R)-pantoate + beta-alanine + ATP = (R)-pantothenate + AMP + diphosphate + H(+)</text>
        <dbReference type="Rhea" id="RHEA:10912"/>
        <dbReference type="ChEBI" id="CHEBI:15378"/>
        <dbReference type="ChEBI" id="CHEBI:15980"/>
        <dbReference type="ChEBI" id="CHEBI:29032"/>
        <dbReference type="ChEBI" id="CHEBI:30616"/>
        <dbReference type="ChEBI" id="CHEBI:33019"/>
        <dbReference type="ChEBI" id="CHEBI:57966"/>
        <dbReference type="ChEBI" id="CHEBI:456215"/>
        <dbReference type="EC" id="6.3.2.1"/>
    </reaction>
</comment>
<comment type="pathway">
    <text evidence="1">Cofactor biosynthesis; (R)-pantothenate biosynthesis; (R)-pantothenate from (R)-pantoate and beta-alanine: step 1/1.</text>
</comment>
<comment type="subunit">
    <text evidence="1">Homodimer.</text>
</comment>
<comment type="subcellular location">
    <subcellularLocation>
        <location evidence="1">Cytoplasm</location>
    </subcellularLocation>
</comment>
<comment type="miscellaneous">
    <text evidence="1">The reaction proceeds by a bi uni uni bi ping pong mechanism.</text>
</comment>
<comment type="similarity">
    <text evidence="1">Belongs to the pantothenate synthetase family.</text>
</comment>
<dbReference type="EC" id="6.3.2.1" evidence="1"/>
<dbReference type="EMBL" id="CP000964">
    <property type="protein sequence ID" value="ACI09789.1"/>
    <property type="molecule type" value="Genomic_DNA"/>
</dbReference>
<dbReference type="SMR" id="B5Y1P6"/>
<dbReference type="KEGG" id="kpe:KPK_4596"/>
<dbReference type="HOGENOM" id="CLU_047148_0_0_6"/>
<dbReference type="UniPathway" id="UPA00028">
    <property type="reaction ID" value="UER00005"/>
</dbReference>
<dbReference type="Proteomes" id="UP000001734">
    <property type="component" value="Chromosome"/>
</dbReference>
<dbReference type="GO" id="GO:0005829">
    <property type="term" value="C:cytosol"/>
    <property type="evidence" value="ECO:0007669"/>
    <property type="project" value="TreeGrafter"/>
</dbReference>
<dbReference type="GO" id="GO:0005524">
    <property type="term" value="F:ATP binding"/>
    <property type="evidence" value="ECO:0007669"/>
    <property type="project" value="UniProtKB-KW"/>
</dbReference>
<dbReference type="GO" id="GO:0004592">
    <property type="term" value="F:pantoate-beta-alanine ligase activity"/>
    <property type="evidence" value="ECO:0007669"/>
    <property type="project" value="UniProtKB-UniRule"/>
</dbReference>
<dbReference type="GO" id="GO:0015940">
    <property type="term" value="P:pantothenate biosynthetic process"/>
    <property type="evidence" value="ECO:0007669"/>
    <property type="project" value="UniProtKB-UniRule"/>
</dbReference>
<dbReference type="CDD" id="cd00560">
    <property type="entry name" value="PanC"/>
    <property type="match status" value="1"/>
</dbReference>
<dbReference type="FunFam" id="3.30.1300.10:FF:000001">
    <property type="entry name" value="Pantothenate synthetase"/>
    <property type="match status" value="1"/>
</dbReference>
<dbReference type="FunFam" id="3.40.50.620:FF:000013">
    <property type="entry name" value="Pantothenate synthetase"/>
    <property type="match status" value="1"/>
</dbReference>
<dbReference type="Gene3D" id="3.40.50.620">
    <property type="entry name" value="HUPs"/>
    <property type="match status" value="1"/>
</dbReference>
<dbReference type="Gene3D" id="3.30.1300.10">
    <property type="entry name" value="Pantoate-beta-alanine ligase, C-terminal domain"/>
    <property type="match status" value="1"/>
</dbReference>
<dbReference type="HAMAP" id="MF_00158">
    <property type="entry name" value="PanC"/>
    <property type="match status" value="1"/>
</dbReference>
<dbReference type="InterPro" id="IPR003721">
    <property type="entry name" value="Pantoate_ligase"/>
</dbReference>
<dbReference type="InterPro" id="IPR042176">
    <property type="entry name" value="Pantoate_ligase_C"/>
</dbReference>
<dbReference type="InterPro" id="IPR014729">
    <property type="entry name" value="Rossmann-like_a/b/a_fold"/>
</dbReference>
<dbReference type="NCBIfam" id="TIGR00018">
    <property type="entry name" value="panC"/>
    <property type="match status" value="1"/>
</dbReference>
<dbReference type="PANTHER" id="PTHR21299">
    <property type="entry name" value="CYTIDYLATE KINASE/PANTOATE-BETA-ALANINE LIGASE"/>
    <property type="match status" value="1"/>
</dbReference>
<dbReference type="PANTHER" id="PTHR21299:SF1">
    <property type="entry name" value="PANTOATE--BETA-ALANINE LIGASE"/>
    <property type="match status" value="1"/>
</dbReference>
<dbReference type="Pfam" id="PF02569">
    <property type="entry name" value="Pantoate_ligase"/>
    <property type="match status" value="1"/>
</dbReference>
<dbReference type="SUPFAM" id="SSF52374">
    <property type="entry name" value="Nucleotidylyl transferase"/>
    <property type="match status" value="1"/>
</dbReference>
<reference key="1">
    <citation type="journal article" date="2008" name="PLoS Genet.">
        <title>Complete genome sequence of the N2-fixing broad host range endophyte Klebsiella pneumoniae 342 and virulence predictions verified in mice.</title>
        <authorList>
            <person name="Fouts D.E."/>
            <person name="Tyler H.L."/>
            <person name="DeBoy R.T."/>
            <person name="Daugherty S."/>
            <person name="Ren Q."/>
            <person name="Badger J.H."/>
            <person name="Durkin A.S."/>
            <person name="Huot H."/>
            <person name="Shrivastava S."/>
            <person name="Kothari S."/>
            <person name="Dodson R.J."/>
            <person name="Mohamoud Y."/>
            <person name="Khouri H."/>
            <person name="Roesch L.F.W."/>
            <person name="Krogfelt K.A."/>
            <person name="Struve C."/>
            <person name="Triplett E.W."/>
            <person name="Methe B.A."/>
        </authorList>
    </citation>
    <scope>NUCLEOTIDE SEQUENCE [LARGE SCALE GENOMIC DNA]</scope>
    <source>
        <strain>342</strain>
    </source>
</reference>
<organism>
    <name type="scientific">Klebsiella pneumoniae (strain 342)</name>
    <dbReference type="NCBI Taxonomy" id="507522"/>
    <lineage>
        <taxon>Bacteria</taxon>
        <taxon>Pseudomonadati</taxon>
        <taxon>Pseudomonadota</taxon>
        <taxon>Gammaproteobacteria</taxon>
        <taxon>Enterobacterales</taxon>
        <taxon>Enterobacteriaceae</taxon>
        <taxon>Klebsiella/Raoultella group</taxon>
        <taxon>Klebsiella</taxon>
        <taxon>Klebsiella pneumoniae complex</taxon>
    </lineage>
</organism>
<name>PANC_KLEP3</name>
<protein>
    <recommendedName>
        <fullName evidence="1">Pantothenate synthetase</fullName>
        <shortName evidence="1">PS</shortName>
        <ecNumber evidence="1">6.3.2.1</ecNumber>
    </recommendedName>
    <alternativeName>
        <fullName evidence="1">Pantoate--beta-alanine ligase</fullName>
    </alternativeName>
    <alternativeName>
        <fullName evidence="1">Pantoate-activating enzyme</fullName>
    </alternativeName>
</protein>
<evidence type="ECO:0000255" key="1">
    <source>
        <dbReference type="HAMAP-Rule" id="MF_00158"/>
    </source>
</evidence>
<accession>B5Y1P6</accession>